<name>CCA_LACDB</name>
<comment type="function">
    <text evidence="1">Catalyzes the addition and repair of the essential 3'-terminal CCA sequence in tRNAs without using a nucleic acid template. Adds these three nucleotides in the order of C, C, and A to the tRNA nucleotide-73, using CTP and ATP as substrates and producing inorganic pyrophosphate. tRNA 3'-terminal CCA addition is required both for tRNA processing and repair. Also involved in tRNA surveillance by mediating tandem CCA addition to generate a CCACCA at the 3' terminus of unstable tRNAs. While stable tRNAs receive only 3'-terminal CCA, unstable tRNAs are marked with CCACCA and rapidly degraded.</text>
</comment>
<comment type="catalytic activity">
    <reaction evidence="1">
        <text>a tRNA precursor + 2 CTP + ATP = a tRNA with a 3' CCA end + 3 diphosphate</text>
        <dbReference type="Rhea" id="RHEA:14433"/>
        <dbReference type="Rhea" id="RHEA-COMP:10465"/>
        <dbReference type="Rhea" id="RHEA-COMP:10468"/>
        <dbReference type="ChEBI" id="CHEBI:30616"/>
        <dbReference type="ChEBI" id="CHEBI:33019"/>
        <dbReference type="ChEBI" id="CHEBI:37563"/>
        <dbReference type="ChEBI" id="CHEBI:74896"/>
        <dbReference type="ChEBI" id="CHEBI:83071"/>
        <dbReference type="EC" id="2.7.7.72"/>
    </reaction>
</comment>
<comment type="catalytic activity">
    <reaction evidence="1">
        <text>a tRNA with a 3' CCA end + 2 CTP + ATP = a tRNA with a 3' CCACCA end + 3 diphosphate</text>
        <dbReference type="Rhea" id="RHEA:76235"/>
        <dbReference type="Rhea" id="RHEA-COMP:10468"/>
        <dbReference type="Rhea" id="RHEA-COMP:18655"/>
        <dbReference type="ChEBI" id="CHEBI:30616"/>
        <dbReference type="ChEBI" id="CHEBI:33019"/>
        <dbReference type="ChEBI" id="CHEBI:37563"/>
        <dbReference type="ChEBI" id="CHEBI:83071"/>
        <dbReference type="ChEBI" id="CHEBI:195187"/>
    </reaction>
    <physiologicalReaction direction="left-to-right" evidence="1">
        <dbReference type="Rhea" id="RHEA:76236"/>
    </physiologicalReaction>
</comment>
<comment type="cofactor">
    <cofactor evidence="1">
        <name>Mg(2+)</name>
        <dbReference type="ChEBI" id="CHEBI:18420"/>
    </cofactor>
</comment>
<comment type="subunit">
    <text evidence="1">Homodimer.</text>
</comment>
<comment type="miscellaneous">
    <text evidence="1">A single active site specifically recognizes both ATP and CTP and is responsible for their addition.</text>
</comment>
<comment type="similarity">
    <text evidence="1">Belongs to the tRNA nucleotidyltransferase/poly(A) polymerase family. Bacterial CCA-adding enzyme type 3 subfamily.</text>
</comment>
<sequence length="396" mass="44214">MTNIRITEVFTQAMPVLEKLEEAGFEAYFVGGCVRDLLLERPIHDVDIATSAYPEEVKETFAKSIDTGILHGTVTVLYGGSSYEITTFRTESGYQDFRRPDKVTFVQNLDEDLKRRDFTINALAMNRQGEIIDLFDGLGDLKRRVIKAVGVAEDRFHEDALRMMRAVRFMSQLSFSLEEKTRQAIINNHELLSKISVERIREEFVKLALGKDSRQAFKDFLATGLSEECPGLAGKKDQLSVLTDLKAGPDDEAVFWSLIAVLINLPADKISPFMRAWKNSNAMNQQVRQIVAAFDLLSRGEESDFDLFEIGQENLEAALKLAGLLGKPLSSQVLLDRYNRLPIKAAGELAIDGQWLIKEGIKPSPELGQLLRKALEGVVSGQVENSQAAIAEFLAI</sequence>
<keyword id="KW-0067">ATP-binding</keyword>
<keyword id="KW-0460">Magnesium</keyword>
<keyword id="KW-0479">Metal-binding</keyword>
<keyword id="KW-0547">Nucleotide-binding</keyword>
<keyword id="KW-0548">Nucleotidyltransferase</keyword>
<keyword id="KW-0692">RNA repair</keyword>
<keyword id="KW-0694">RNA-binding</keyword>
<keyword id="KW-0808">Transferase</keyword>
<keyword id="KW-0819">tRNA processing</keyword>
<feature type="chain" id="PRO_1000067292" description="CCA-adding enzyme">
    <location>
        <begin position="1"/>
        <end position="396"/>
    </location>
</feature>
<feature type="binding site" evidence="1">
    <location>
        <position position="32"/>
    </location>
    <ligand>
        <name>ATP</name>
        <dbReference type="ChEBI" id="CHEBI:30616"/>
    </ligand>
</feature>
<feature type="binding site" evidence="1">
    <location>
        <position position="32"/>
    </location>
    <ligand>
        <name>CTP</name>
        <dbReference type="ChEBI" id="CHEBI:37563"/>
    </ligand>
</feature>
<feature type="binding site" evidence="1">
    <location>
        <position position="35"/>
    </location>
    <ligand>
        <name>ATP</name>
        <dbReference type="ChEBI" id="CHEBI:30616"/>
    </ligand>
</feature>
<feature type="binding site" evidence="1">
    <location>
        <position position="35"/>
    </location>
    <ligand>
        <name>CTP</name>
        <dbReference type="ChEBI" id="CHEBI:37563"/>
    </ligand>
</feature>
<feature type="binding site" evidence="1">
    <location>
        <position position="45"/>
    </location>
    <ligand>
        <name>Mg(2+)</name>
        <dbReference type="ChEBI" id="CHEBI:18420"/>
    </ligand>
</feature>
<feature type="binding site" evidence="1">
    <location>
        <position position="47"/>
    </location>
    <ligand>
        <name>Mg(2+)</name>
        <dbReference type="ChEBI" id="CHEBI:18420"/>
    </ligand>
</feature>
<feature type="binding site" evidence="1">
    <location>
        <position position="116"/>
    </location>
    <ligand>
        <name>ATP</name>
        <dbReference type="ChEBI" id="CHEBI:30616"/>
    </ligand>
</feature>
<feature type="binding site" evidence="1">
    <location>
        <position position="116"/>
    </location>
    <ligand>
        <name>CTP</name>
        <dbReference type="ChEBI" id="CHEBI:37563"/>
    </ligand>
</feature>
<feature type="binding site" evidence="1">
    <location>
        <position position="159"/>
    </location>
    <ligand>
        <name>ATP</name>
        <dbReference type="ChEBI" id="CHEBI:30616"/>
    </ligand>
</feature>
<feature type="binding site" evidence="1">
    <location>
        <position position="159"/>
    </location>
    <ligand>
        <name>CTP</name>
        <dbReference type="ChEBI" id="CHEBI:37563"/>
    </ligand>
</feature>
<feature type="binding site" evidence="1">
    <location>
        <position position="162"/>
    </location>
    <ligand>
        <name>ATP</name>
        <dbReference type="ChEBI" id="CHEBI:30616"/>
    </ligand>
</feature>
<feature type="binding site" evidence="1">
    <location>
        <position position="162"/>
    </location>
    <ligand>
        <name>CTP</name>
        <dbReference type="ChEBI" id="CHEBI:37563"/>
    </ligand>
</feature>
<feature type="binding site" evidence="1">
    <location>
        <position position="165"/>
    </location>
    <ligand>
        <name>ATP</name>
        <dbReference type="ChEBI" id="CHEBI:30616"/>
    </ligand>
</feature>
<feature type="binding site" evidence="1">
    <location>
        <position position="165"/>
    </location>
    <ligand>
        <name>CTP</name>
        <dbReference type="ChEBI" id="CHEBI:37563"/>
    </ligand>
</feature>
<feature type="binding site" evidence="1">
    <location>
        <position position="168"/>
    </location>
    <ligand>
        <name>ATP</name>
        <dbReference type="ChEBI" id="CHEBI:30616"/>
    </ligand>
</feature>
<feature type="binding site" evidence="1">
    <location>
        <position position="168"/>
    </location>
    <ligand>
        <name>CTP</name>
        <dbReference type="ChEBI" id="CHEBI:37563"/>
    </ligand>
</feature>
<accession>Q049Z4</accession>
<proteinExistence type="inferred from homology"/>
<gene>
    <name evidence="1" type="primary">cca</name>
    <name type="ordered locus">LBUL_1197</name>
</gene>
<protein>
    <recommendedName>
        <fullName evidence="1">CCA-adding enzyme</fullName>
        <ecNumber evidence="1">2.7.7.72</ecNumber>
    </recommendedName>
    <alternativeName>
        <fullName evidence="1">CCA tRNA nucleotidyltransferase</fullName>
    </alternativeName>
    <alternativeName>
        <fullName evidence="1">tRNA CCA-pyrophosphorylase</fullName>
    </alternativeName>
    <alternativeName>
        <fullName evidence="1">tRNA adenylyl-/cytidylyl- transferase</fullName>
    </alternativeName>
    <alternativeName>
        <fullName evidence="1">tRNA nucleotidyltransferase</fullName>
    </alternativeName>
    <alternativeName>
        <fullName evidence="1">tRNA-NT</fullName>
    </alternativeName>
</protein>
<organism>
    <name type="scientific">Lactobacillus delbrueckii subsp. bulgaricus (strain ATCC BAA-365 / Lb-18)</name>
    <dbReference type="NCBI Taxonomy" id="321956"/>
    <lineage>
        <taxon>Bacteria</taxon>
        <taxon>Bacillati</taxon>
        <taxon>Bacillota</taxon>
        <taxon>Bacilli</taxon>
        <taxon>Lactobacillales</taxon>
        <taxon>Lactobacillaceae</taxon>
        <taxon>Lactobacillus</taxon>
    </lineage>
</organism>
<evidence type="ECO:0000255" key="1">
    <source>
        <dbReference type="HAMAP-Rule" id="MF_01263"/>
    </source>
</evidence>
<reference key="1">
    <citation type="journal article" date="2006" name="Proc. Natl. Acad. Sci. U.S.A.">
        <title>Comparative genomics of the lactic acid bacteria.</title>
        <authorList>
            <person name="Makarova K.S."/>
            <person name="Slesarev A."/>
            <person name="Wolf Y.I."/>
            <person name="Sorokin A."/>
            <person name="Mirkin B."/>
            <person name="Koonin E.V."/>
            <person name="Pavlov A."/>
            <person name="Pavlova N."/>
            <person name="Karamychev V."/>
            <person name="Polouchine N."/>
            <person name="Shakhova V."/>
            <person name="Grigoriev I."/>
            <person name="Lou Y."/>
            <person name="Rohksar D."/>
            <person name="Lucas S."/>
            <person name="Huang K."/>
            <person name="Goodstein D.M."/>
            <person name="Hawkins T."/>
            <person name="Plengvidhya V."/>
            <person name="Welker D."/>
            <person name="Hughes J."/>
            <person name="Goh Y."/>
            <person name="Benson A."/>
            <person name="Baldwin K."/>
            <person name="Lee J.-H."/>
            <person name="Diaz-Muniz I."/>
            <person name="Dosti B."/>
            <person name="Smeianov V."/>
            <person name="Wechter W."/>
            <person name="Barabote R."/>
            <person name="Lorca G."/>
            <person name="Altermann E."/>
            <person name="Barrangou R."/>
            <person name="Ganesan B."/>
            <person name="Xie Y."/>
            <person name="Rawsthorne H."/>
            <person name="Tamir D."/>
            <person name="Parker C."/>
            <person name="Breidt F."/>
            <person name="Broadbent J.R."/>
            <person name="Hutkins R."/>
            <person name="O'Sullivan D."/>
            <person name="Steele J."/>
            <person name="Unlu G."/>
            <person name="Saier M.H. Jr."/>
            <person name="Klaenhammer T."/>
            <person name="Richardson P."/>
            <person name="Kozyavkin S."/>
            <person name="Weimer B.C."/>
            <person name="Mills D.A."/>
        </authorList>
    </citation>
    <scope>NUCLEOTIDE SEQUENCE [LARGE SCALE GENOMIC DNA]</scope>
    <source>
        <strain>ATCC BAA-365 / Lb-18</strain>
    </source>
</reference>
<dbReference type="EC" id="2.7.7.72" evidence="1"/>
<dbReference type="EMBL" id="CP000412">
    <property type="protein sequence ID" value="ABJ58728.1"/>
    <property type="molecule type" value="Genomic_DNA"/>
</dbReference>
<dbReference type="RefSeq" id="WP_011678377.1">
    <property type="nucleotide sequence ID" value="NC_008529.1"/>
</dbReference>
<dbReference type="SMR" id="Q049Z4"/>
<dbReference type="KEGG" id="lbu:LBUL_1197"/>
<dbReference type="HOGENOM" id="CLU_015961_3_0_9"/>
<dbReference type="BioCyc" id="LDEL321956:LBUL_RS05590-MONOMER"/>
<dbReference type="GO" id="GO:0005524">
    <property type="term" value="F:ATP binding"/>
    <property type="evidence" value="ECO:0007669"/>
    <property type="project" value="UniProtKB-UniRule"/>
</dbReference>
<dbReference type="GO" id="GO:0004810">
    <property type="term" value="F:CCA tRNA nucleotidyltransferase activity"/>
    <property type="evidence" value="ECO:0007669"/>
    <property type="project" value="UniProtKB-UniRule"/>
</dbReference>
<dbReference type="GO" id="GO:0000287">
    <property type="term" value="F:magnesium ion binding"/>
    <property type="evidence" value="ECO:0007669"/>
    <property type="project" value="UniProtKB-UniRule"/>
</dbReference>
<dbReference type="GO" id="GO:0000049">
    <property type="term" value="F:tRNA binding"/>
    <property type="evidence" value="ECO:0007669"/>
    <property type="project" value="UniProtKB-UniRule"/>
</dbReference>
<dbReference type="GO" id="GO:0042245">
    <property type="term" value="P:RNA repair"/>
    <property type="evidence" value="ECO:0007669"/>
    <property type="project" value="UniProtKB-KW"/>
</dbReference>
<dbReference type="GO" id="GO:0001680">
    <property type="term" value="P:tRNA 3'-terminal CCA addition"/>
    <property type="evidence" value="ECO:0007669"/>
    <property type="project" value="UniProtKB-UniRule"/>
</dbReference>
<dbReference type="CDD" id="cd05398">
    <property type="entry name" value="NT_ClassII-CCAase"/>
    <property type="match status" value="1"/>
</dbReference>
<dbReference type="Gene3D" id="1.10.110.30">
    <property type="match status" value="1"/>
</dbReference>
<dbReference type="Gene3D" id="1.10.246.80">
    <property type="match status" value="1"/>
</dbReference>
<dbReference type="Gene3D" id="1.20.58.560">
    <property type="match status" value="1"/>
</dbReference>
<dbReference type="Gene3D" id="3.30.460.10">
    <property type="entry name" value="Beta Polymerase, domain 2"/>
    <property type="match status" value="1"/>
</dbReference>
<dbReference type="HAMAP" id="MF_01263">
    <property type="entry name" value="CCA_bact_type3"/>
    <property type="match status" value="1"/>
</dbReference>
<dbReference type="InterPro" id="IPR050264">
    <property type="entry name" value="Bact_CCA-adding_enz_type3_sf"/>
</dbReference>
<dbReference type="InterPro" id="IPR032810">
    <property type="entry name" value="CCA-adding_enz_C"/>
</dbReference>
<dbReference type="InterPro" id="IPR023068">
    <property type="entry name" value="CCA-adding_enz_firmicutes"/>
</dbReference>
<dbReference type="InterPro" id="IPR043519">
    <property type="entry name" value="NT_sf"/>
</dbReference>
<dbReference type="InterPro" id="IPR002646">
    <property type="entry name" value="PolA_pol_head_dom"/>
</dbReference>
<dbReference type="InterPro" id="IPR032828">
    <property type="entry name" value="PolyA_RNA-bd"/>
</dbReference>
<dbReference type="NCBIfam" id="NF009814">
    <property type="entry name" value="PRK13299.1"/>
    <property type="match status" value="1"/>
</dbReference>
<dbReference type="PANTHER" id="PTHR46173">
    <property type="entry name" value="CCA TRNA NUCLEOTIDYLTRANSFERASE 1, MITOCHONDRIAL"/>
    <property type="match status" value="1"/>
</dbReference>
<dbReference type="PANTHER" id="PTHR46173:SF1">
    <property type="entry name" value="CCA TRNA NUCLEOTIDYLTRANSFERASE 1, MITOCHONDRIAL"/>
    <property type="match status" value="1"/>
</dbReference>
<dbReference type="Pfam" id="PF01743">
    <property type="entry name" value="PolyA_pol"/>
    <property type="match status" value="1"/>
</dbReference>
<dbReference type="Pfam" id="PF12627">
    <property type="entry name" value="PolyA_pol_RNAbd"/>
    <property type="match status" value="1"/>
</dbReference>
<dbReference type="Pfam" id="PF13735">
    <property type="entry name" value="tRNA_NucTran2_2"/>
    <property type="match status" value="1"/>
</dbReference>
<dbReference type="SUPFAM" id="SSF81301">
    <property type="entry name" value="Nucleotidyltransferase"/>
    <property type="match status" value="1"/>
</dbReference>
<dbReference type="SUPFAM" id="SSF81891">
    <property type="entry name" value="Poly A polymerase C-terminal region-like"/>
    <property type="match status" value="1"/>
</dbReference>